<feature type="chain" id="PRO_1000068310" description="Peptide methionine sulfoxide reductase MsrA">
    <location>
        <begin position="1"/>
        <end position="181"/>
    </location>
</feature>
<feature type="active site" evidence="1">
    <location>
        <position position="14"/>
    </location>
</feature>
<keyword id="KW-0560">Oxidoreductase</keyword>
<keyword id="KW-1185">Reference proteome</keyword>
<name>MSRA_BACLD</name>
<organism>
    <name type="scientific">Bacillus licheniformis (strain ATCC 14580 / DSM 13 / JCM 2505 / CCUG 7422 / NBRC 12200 / NCIMB 9375 / NCTC 10341 / NRRL NRS-1264 / Gibson 46)</name>
    <dbReference type="NCBI Taxonomy" id="279010"/>
    <lineage>
        <taxon>Bacteria</taxon>
        <taxon>Bacillati</taxon>
        <taxon>Bacillota</taxon>
        <taxon>Bacilli</taxon>
        <taxon>Bacillales</taxon>
        <taxon>Bacillaceae</taxon>
        <taxon>Bacillus</taxon>
    </lineage>
</organism>
<sequence>MAEKRELATFAGGCFWCMVKPFDEQPGILKVESGYTGGHTENPTYEEVCSNTTGHREAVQITFDPDVFPYEKLLELYWQQIDPTDSGGQFTDRGESYRTAIFYHNDKQRKLAEESKKKLGESGIFKDPIATDILEAGPFYPAEEYHQDYHKKHPERYTQYRIGSGREGFLQQHWGRKHDEQ</sequence>
<comment type="function">
    <text evidence="1">Has an important function as a repair enzyme for proteins that have been inactivated by oxidation. Catalyzes the reversible oxidation-reduction of methionine sulfoxide in proteins to methionine.</text>
</comment>
<comment type="catalytic activity">
    <reaction evidence="1">
        <text>L-methionyl-[protein] + [thioredoxin]-disulfide + H2O = L-methionyl-(S)-S-oxide-[protein] + [thioredoxin]-dithiol</text>
        <dbReference type="Rhea" id="RHEA:14217"/>
        <dbReference type="Rhea" id="RHEA-COMP:10698"/>
        <dbReference type="Rhea" id="RHEA-COMP:10700"/>
        <dbReference type="Rhea" id="RHEA-COMP:12313"/>
        <dbReference type="Rhea" id="RHEA-COMP:12315"/>
        <dbReference type="ChEBI" id="CHEBI:15377"/>
        <dbReference type="ChEBI" id="CHEBI:16044"/>
        <dbReference type="ChEBI" id="CHEBI:29950"/>
        <dbReference type="ChEBI" id="CHEBI:44120"/>
        <dbReference type="ChEBI" id="CHEBI:50058"/>
        <dbReference type="EC" id="1.8.4.11"/>
    </reaction>
</comment>
<comment type="catalytic activity">
    <reaction evidence="1">
        <text>[thioredoxin]-disulfide + L-methionine + H2O = L-methionine (S)-S-oxide + [thioredoxin]-dithiol</text>
        <dbReference type="Rhea" id="RHEA:19993"/>
        <dbReference type="Rhea" id="RHEA-COMP:10698"/>
        <dbReference type="Rhea" id="RHEA-COMP:10700"/>
        <dbReference type="ChEBI" id="CHEBI:15377"/>
        <dbReference type="ChEBI" id="CHEBI:29950"/>
        <dbReference type="ChEBI" id="CHEBI:50058"/>
        <dbReference type="ChEBI" id="CHEBI:57844"/>
        <dbReference type="ChEBI" id="CHEBI:58772"/>
        <dbReference type="EC" id="1.8.4.11"/>
    </reaction>
</comment>
<comment type="similarity">
    <text evidence="1">Belongs to the MsrA Met sulfoxide reductase family.</text>
</comment>
<gene>
    <name evidence="1" type="primary">msrA</name>
    <name type="ordered locus">BLi02303</name>
    <name type="ordered locus">BL01421</name>
</gene>
<dbReference type="EC" id="1.8.4.11" evidence="1"/>
<dbReference type="EMBL" id="CP000002">
    <property type="protein sequence ID" value="AAU23827.2"/>
    <property type="molecule type" value="Genomic_DNA"/>
</dbReference>
<dbReference type="EMBL" id="AE017333">
    <property type="protein sequence ID" value="AAU41183.1"/>
    <property type="molecule type" value="Genomic_DNA"/>
</dbReference>
<dbReference type="RefSeq" id="WP_011198056.1">
    <property type="nucleotide sequence ID" value="NC_006322.1"/>
</dbReference>
<dbReference type="SMR" id="Q65ID1"/>
<dbReference type="STRING" id="279010.BL01421"/>
<dbReference type="GeneID" id="92861101"/>
<dbReference type="KEGG" id="bld:BLi02303"/>
<dbReference type="KEGG" id="bli:BL01421"/>
<dbReference type="PATRIC" id="fig|279010.13.peg.2327"/>
<dbReference type="eggNOG" id="COG0225">
    <property type="taxonomic scope" value="Bacteria"/>
</dbReference>
<dbReference type="HOGENOM" id="CLU_031040_10_1_9"/>
<dbReference type="Proteomes" id="UP000000606">
    <property type="component" value="Chromosome"/>
</dbReference>
<dbReference type="Bgee" id="BL01421">
    <property type="expression patterns" value="Expressed in ovary and 11 other cell types or tissues"/>
</dbReference>
<dbReference type="GO" id="GO:0033744">
    <property type="term" value="F:L-methionine:thioredoxin-disulfide S-oxidoreductase activity"/>
    <property type="evidence" value="ECO:0007669"/>
    <property type="project" value="RHEA"/>
</dbReference>
<dbReference type="GO" id="GO:0008113">
    <property type="term" value="F:peptide-methionine (S)-S-oxide reductase activity"/>
    <property type="evidence" value="ECO:0007669"/>
    <property type="project" value="UniProtKB-UniRule"/>
</dbReference>
<dbReference type="GO" id="GO:0036211">
    <property type="term" value="P:protein modification process"/>
    <property type="evidence" value="ECO:0007669"/>
    <property type="project" value="UniProtKB-UniRule"/>
</dbReference>
<dbReference type="FunFam" id="3.30.1060.10:FF:000003">
    <property type="entry name" value="Peptide methionine sulfoxide reductase MsrA"/>
    <property type="match status" value="1"/>
</dbReference>
<dbReference type="Gene3D" id="3.30.1060.10">
    <property type="entry name" value="Peptide methionine sulphoxide reductase MsrA"/>
    <property type="match status" value="1"/>
</dbReference>
<dbReference type="HAMAP" id="MF_01401">
    <property type="entry name" value="MsrA"/>
    <property type="match status" value="1"/>
</dbReference>
<dbReference type="InterPro" id="IPR002569">
    <property type="entry name" value="Met_Sox_Rdtase_MsrA_dom"/>
</dbReference>
<dbReference type="InterPro" id="IPR036509">
    <property type="entry name" value="Met_Sox_Rdtase_MsrA_sf"/>
</dbReference>
<dbReference type="NCBIfam" id="TIGR00401">
    <property type="entry name" value="msrA"/>
    <property type="match status" value="1"/>
</dbReference>
<dbReference type="PANTHER" id="PTHR43774">
    <property type="entry name" value="PEPTIDE METHIONINE SULFOXIDE REDUCTASE"/>
    <property type="match status" value="1"/>
</dbReference>
<dbReference type="PANTHER" id="PTHR43774:SF1">
    <property type="entry name" value="PEPTIDE METHIONINE SULFOXIDE REDUCTASE MSRA 2"/>
    <property type="match status" value="1"/>
</dbReference>
<dbReference type="Pfam" id="PF01625">
    <property type="entry name" value="PMSR"/>
    <property type="match status" value="1"/>
</dbReference>
<dbReference type="SUPFAM" id="SSF55068">
    <property type="entry name" value="Peptide methionine sulfoxide reductase"/>
    <property type="match status" value="1"/>
</dbReference>
<accession>Q65ID1</accession>
<accession>Q62TT2</accession>
<reference key="1">
    <citation type="journal article" date="2004" name="J. Mol. Microbiol. Biotechnol.">
        <title>The complete genome sequence of Bacillus licheniformis DSM13, an organism with great industrial potential.</title>
        <authorList>
            <person name="Veith B."/>
            <person name="Herzberg C."/>
            <person name="Steckel S."/>
            <person name="Feesche J."/>
            <person name="Maurer K.H."/>
            <person name="Ehrenreich P."/>
            <person name="Baeumer S."/>
            <person name="Henne A."/>
            <person name="Liesegang H."/>
            <person name="Merkl R."/>
            <person name="Ehrenreich A."/>
            <person name="Gottschalk G."/>
        </authorList>
    </citation>
    <scope>NUCLEOTIDE SEQUENCE [LARGE SCALE GENOMIC DNA]</scope>
    <source>
        <strain>ATCC 14580 / DSM 13 / JCM 2505 / CCUG 7422 / NBRC 12200 / NCIMB 9375 / NCTC 10341 / NRRL NRS-1264 / Gibson 46</strain>
    </source>
</reference>
<reference key="2">
    <citation type="journal article" date="2004" name="Genome Biol.">
        <title>Complete genome sequence of the industrial bacterium Bacillus licheniformis and comparisons with closely related Bacillus species.</title>
        <authorList>
            <person name="Rey M.W."/>
            <person name="Ramaiya P."/>
            <person name="Nelson B.A."/>
            <person name="Brody-Karpin S.D."/>
            <person name="Zaretsky E.J."/>
            <person name="Tang M."/>
            <person name="Lopez de Leon A."/>
            <person name="Xiang H."/>
            <person name="Gusti V."/>
            <person name="Clausen I.G."/>
            <person name="Olsen P.B."/>
            <person name="Rasmussen M.D."/>
            <person name="Andersen J.T."/>
            <person name="Joergensen P.L."/>
            <person name="Larsen T.S."/>
            <person name="Sorokin A."/>
            <person name="Bolotin A."/>
            <person name="Lapidus A."/>
            <person name="Galleron N."/>
            <person name="Ehrlich S.D."/>
            <person name="Berka R.M."/>
        </authorList>
    </citation>
    <scope>NUCLEOTIDE SEQUENCE [LARGE SCALE GENOMIC DNA]</scope>
    <source>
        <strain>ATCC 14580 / DSM 13 / JCM 2505 / CCUG 7422 / NBRC 12200 / NCIMB 9375 / NCTC 10341 / NRRL NRS-1264 / Gibson 46</strain>
    </source>
</reference>
<evidence type="ECO:0000255" key="1">
    <source>
        <dbReference type="HAMAP-Rule" id="MF_01401"/>
    </source>
</evidence>
<proteinExistence type="inferred from homology"/>
<protein>
    <recommendedName>
        <fullName evidence="1">Peptide methionine sulfoxide reductase MsrA</fullName>
        <shortName evidence="1">Protein-methionine-S-oxide reductase</shortName>
        <ecNumber evidence="1">1.8.4.11</ecNumber>
    </recommendedName>
    <alternativeName>
        <fullName evidence="1">Peptide-methionine (S)-S-oxide reductase</fullName>
        <shortName evidence="1">Peptide Met(O) reductase</shortName>
    </alternativeName>
</protein>